<evidence type="ECO:0000255" key="1">
    <source>
        <dbReference type="HAMAP-Rule" id="MF_00135"/>
    </source>
</evidence>
<reference key="1">
    <citation type="journal article" date="2005" name="Nucleic Acids Res.">
        <title>The genome sequence of Xanthomonas oryzae pathovar oryzae KACC10331, the bacterial blight pathogen of rice.</title>
        <authorList>
            <person name="Lee B.-M."/>
            <person name="Park Y.-J."/>
            <person name="Park D.-S."/>
            <person name="Kang H.-W."/>
            <person name="Kim J.-G."/>
            <person name="Song E.-S."/>
            <person name="Park I.-C."/>
            <person name="Yoon U.-H."/>
            <person name="Hahn J.-H."/>
            <person name="Koo B.-S."/>
            <person name="Lee G.-B."/>
            <person name="Kim H."/>
            <person name="Park H.-S."/>
            <person name="Yoon K.-O."/>
            <person name="Kim J.-H."/>
            <person name="Jung C.-H."/>
            <person name="Koh N.-H."/>
            <person name="Seo J.-S."/>
            <person name="Go S.-J."/>
        </authorList>
    </citation>
    <scope>NUCLEOTIDE SEQUENCE [LARGE SCALE GENOMIC DNA]</scope>
    <source>
        <strain>KACC10331 / KXO85</strain>
    </source>
</reference>
<comment type="catalytic activity">
    <reaction evidence="1">
        <text>N-(5-phospho-beta-D-ribosyl)anthranilate = 1-(2-carboxyphenylamino)-1-deoxy-D-ribulose 5-phosphate</text>
        <dbReference type="Rhea" id="RHEA:21540"/>
        <dbReference type="ChEBI" id="CHEBI:18277"/>
        <dbReference type="ChEBI" id="CHEBI:58613"/>
        <dbReference type="EC" id="5.3.1.24"/>
    </reaction>
</comment>
<comment type="pathway">
    <text evidence="1">Amino-acid biosynthesis; L-tryptophan biosynthesis; L-tryptophan from chorismate: step 3/5.</text>
</comment>
<comment type="similarity">
    <text evidence="1">Belongs to the TrpF family.</text>
</comment>
<gene>
    <name evidence="1" type="primary">trpF</name>
    <name type="ordered locus">XOO3254</name>
</gene>
<organism>
    <name type="scientific">Xanthomonas oryzae pv. oryzae (strain KACC10331 / KXO85)</name>
    <dbReference type="NCBI Taxonomy" id="291331"/>
    <lineage>
        <taxon>Bacteria</taxon>
        <taxon>Pseudomonadati</taxon>
        <taxon>Pseudomonadota</taxon>
        <taxon>Gammaproteobacteria</taxon>
        <taxon>Lysobacterales</taxon>
        <taxon>Lysobacteraceae</taxon>
        <taxon>Xanthomonas</taxon>
    </lineage>
</organism>
<feature type="chain" id="PRO_1000018651" description="N-(5'-phosphoribosyl)anthranilate isomerase">
    <location>
        <begin position="1"/>
        <end position="222"/>
    </location>
</feature>
<sequence length="222" mass="24118">MNRSLYRTRIKFCGMTRAGDIRLAGELGVDAVGFIFAHGSPRRVAPAEARAMRQATAPMVDVVALFRNNSKEEVREVVRTVRPTLLQFHGEEEDAFCRSFNLPYLKAVPMGSTGVNGEDANARTLQLSYPNTAGFLFDSHAPGAGGGTGKTFDWSRLPTGLHRPFLLAGGINAGNVFDAIVATLPWGVDVSSGVELAPGIKDGHKMRKFVEEVRRADCHEMS</sequence>
<proteinExistence type="inferred from homology"/>
<keyword id="KW-0028">Amino-acid biosynthesis</keyword>
<keyword id="KW-0057">Aromatic amino acid biosynthesis</keyword>
<keyword id="KW-0413">Isomerase</keyword>
<keyword id="KW-1185">Reference proteome</keyword>
<keyword id="KW-0822">Tryptophan biosynthesis</keyword>
<accession>Q5GXR3</accession>
<dbReference type="EC" id="5.3.1.24" evidence="1"/>
<dbReference type="EMBL" id="AE013598">
    <property type="protein sequence ID" value="AAW76508.1"/>
    <property type="molecule type" value="Genomic_DNA"/>
</dbReference>
<dbReference type="SMR" id="Q5GXR3"/>
<dbReference type="STRING" id="291331.XOO3254"/>
<dbReference type="KEGG" id="xoo:XOO3254"/>
<dbReference type="HOGENOM" id="CLU_076364_2_0_6"/>
<dbReference type="UniPathway" id="UPA00035">
    <property type="reaction ID" value="UER00042"/>
</dbReference>
<dbReference type="Proteomes" id="UP000006735">
    <property type="component" value="Chromosome"/>
</dbReference>
<dbReference type="GO" id="GO:0004640">
    <property type="term" value="F:phosphoribosylanthranilate isomerase activity"/>
    <property type="evidence" value="ECO:0007669"/>
    <property type="project" value="UniProtKB-UniRule"/>
</dbReference>
<dbReference type="GO" id="GO:0000162">
    <property type="term" value="P:L-tryptophan biosynthetic process"/>
    <property type="evidence" value="ECO:0007669"/>
    <property type="project" value="UniProtKB-UniRule"/>
</dbReference>
<dbReference type="CDD" id="cd00405">
    <property type="entry name" value="PRAI"/>
    <property type="match status" value="1"/>
</dbReference>
<dbReference type="FunFam" id="3.20.20.70:FF:000176">
    <property type="entry name" value="N-(5'-phosphoribosyl)anthranilate isomerase"/>
    <property type="match status" value="1"/>
</dbReference>
<dbReference type="Gene3D" id="3.20.20.70">
    <property type="entry name" value="Aldolase class I"/>
    <property type="match status" value="1"/>
</dbReference>
<dbReference type="HAMAP" id="MF_00135">
    <property type="entry name" value="PRAI"/>
    <property type="match status" value="1"/>
</dbReference>
<dbReference type="InterPro" id="IPR013785">
    <property type="entry name" value="Aldolase_TIM"/>
</dbReference>
<dbReference type="InterPro" id="IPR001240">
    <property type="entry name" value="PRAI_dom"/>
</dbReference>
<dbReference type="InterPro" id="IPR011060">
    <property type="entry name" value="RibuloseP-bd_barrel"/>
</dbReference>
<dbReference type="InterPro" id="IPR044643">
    <property type="entry name" value="TrpF_fam"/>
</dbReference>
<dbReference type="NCBIfam" id="NF002296">
    <property type="entry name" value="PRK01222.1-2"/>
    <property type="match status" value="1"/>
</dbReference>
<dbReference type="NCBIfam" id="NF002298">
    <property type="entry name" value="PRK01222.1-4"/>
    <property type="match status" value="1"/>
</dbReference>
<dbReference type="PANTHER" id="PTHR42894">
    <property type="entry name" value="N-(5'-PHOSPHORIBOSYL)ANTHRANILATE ISOMERASE"/>
    <property type="match status" value="1"/>
</dbReference>
<dbReference type="PANTHER" id="PTHR42894:SF1">
    <property type="entry name" value="N-(5'-PHOSPHORIBOSYL)ANTHRANILATE ISOMERASE"/>
    <property type="match status" value="1"/>
</dbReference>
<dbReference type="Pfam" id="PF00697">
    <property type="entry name" value="PRAI"/>
    <property type="match status" value="1"/>
</dbReference>
<dbReference type="SUPFAM" id="SSF51366">
    <property type="entry name" value="Ribulose-phoshate binding barrel"/>
    <property type="match status" value="1"/>
</dbReference>
<protein>
    <recommendedName>
        <fullName evidence="1">N-(5'-phosphoribosyl)anthranilate isomerase</fullName>
        <shortName evidence="1">PRAI</shortName>
        <ecNumber evidence="1">5.3.1.24</ecNumber>
    </recommendedName>
</protein>
<name>TRPF_XANOR</name>